<keyword id="KW-0066">ATP synthesis</keyword>
<keyword id="KW-0997">Cell inner membrane</keyword>
<keyword id="KW-1003">Cell membrane</keyword>
<keyword id="KW-0138">CF(0)</keyword>
<keyword id="KW-0375">Hydrogen ion transport</keyword>
<keyword id="KW-0406">Ion transport</keyword>
<keyword id="KW-0472">Membrane</keyword>
<keyword id="KW-1185">Reference proteome</keyword>
<keyword id="KW-0812">Transmembrane</keyword>
<keyword id="KW-1133">Transmembrane helix</keyword>
<keyword id="KW-0813">Transport</keyword>
<reference key="1">
    <citation type="journal article" date="2008" name="J. Bacteriol.">
        <title>Genome sequence of the chemolithoautotrophic bacterium Oligotropha carboxidovorans OM5T.</title>
        <authorList>
            <person name="Paul D."/>
            <person name="Bridges S."/>
            <person name="Burgess S.C."/>
            <person name="Dandass Y."/>
            <person name="Lawrence M.L."/>
        </authorList>
    </citation>
    <scope>NUCLEOTIDE SEQUENCE [LARGE SCALE GENOMIC DNA]</scope>
    <source>
        <strain>ATCC 49405 / DSM 1227 / KCTC 32145 / OM5</strain>
    </source>
</reference>
<reference key="2">
    <citation type="journal article" date="2011" name="J. Bacteriol.">
        <title>Complete genome sequences of the chemolithoautotrophic Oligotropha carboxidovorans strains OM4 and OM5.</title>
        <authorList>
            <person name="Volland S."/>
            <person name="Rachinger M."/>
            <person name="Strittmatter A."/>
            <person name="Daniel R."/>
            <person name="Gottschalk G."/>
            <person name="Meyer O."/>
        </authorList>
    </citation>
    <scope>NUCLEOTIDE SEQUENCE [LARGE SCALE GENOMIC DNA]</scope>
    <source>
        <strain>ATCC 49405 / DSM 1227 / KCTC 32145 / OM5</strain>
    </source>
</reference>
<proteinExistence type="inferred from homology"/>
<accession>B6JDC8</accession>
<accession>F8BSK0</accession>
<feature type="chain" id="PRO_0000369019" description="ATP synthase subunit b 2">
    <location>
        <begin position="1"/>
        <end position="187"/>
    </location>
</feature>
<feature type="transmembrane region" description="Helical" evidence="2">
    <location>
        <begin position="31"/>
        <end position="53"/>
    </location>
</feature>
<feature type="region of interest" description="Disordered" evidence="3">
    <location>
        <begin position="1"/>
        <end position="21"/>
    </location>
</feature>
<feature type="compositionally biased region" description="Polar residues" evidence="3">
    <location>
        <begin position="1"/>
        <end position="13"/>
    </location>
</feature>
<protein>
    <recommendedName>
        <fullName>ATP synthase subunit b 2</fullName>
    </recommendedName>
    <alternativeName>
        <fullName>ATP synthase F(0) sector subunit b 2</fullName>
    </alternativeName>
    <alternativeName>
        <fullName>ATPase subunit I 2</fullName>
    </alternativeName>
    <alternativeName>
        <fullName>F-type ATPase subunit b 2</fullName>
        <shortName>F-ATPase subunit b 2</shortName>
    </alternativeName>
</protein>
<evidence type="ECO:0000250" key="1"/>
<evidence type="ECO:0000255" key="2"/>
<evidence type="ECO:0000256" key="3">
    <source>
        <dbReference type="SAM" id="MobiDB-lite"/>
    </source>
</evidence>
<evidence type="ECO:0000305" key="4"/>
<comment type="function">
    <text evidence="1">F(1)F(0) ATP synthase produces ATP from ADP in the presence of a proton or sodium gradient. F-type ATPases consist of two structural domains, F(1) containing the extramembraneous catalytic core and F(0) containing the membrane proton channel, linked together by a central stalk and a peripheral stalk. During catalysis, ATP synthesis in the catalytic domain of F(1) is coupled via a rotary mechanism of the central stalk subunits to proton translocation (By similarity).</text>
</comment>
<comment type="function">
    <text evidence="1">Component of the F(0) channel, it forms part of the peripheral stalk, linking F(1) to F(0). The b'-subunit is a diverged and duplicated form of b found in plants and photosynthetic bacteria (By similarity).</text>
</comment>
<comment type="subunit">
    <text evidence="1">F-type ATPases have 2 components, F(1) - the catalytic core - and F(0) - the membrane proton channel. F(1) has five subunits: alpha(3), beta(3), gamma(1), delta(1), epsilon(1). F(0) has three main subunits: a(1), b(2) and c(10-14). The alpha and beta chains form an alternating ring which encloses part of the gamma chain. F(1) is attached to F(0) by a central stalk formed by the gamma and epsilon chains, while a peripheral stalk is formed by the delta and b chains (By similarity).</text>
</comment>
<comment type="subcellular location">
    <subcellularLocation>
        <location evidence="1">Cell inner membrane</location>
        <topology evidence="1">Single-pass membrane protein</topology>
    </subcellularLocation>
</comment>
<comment type="similarity">
    <text evidence="4">Belongs to the ATPase B chain family.</text>
</comment>
<organism>
    <name type="scientific">Afipia carboxidovorans (strain ATCC 49405 / DSM 1227 / KCTC 32145 / OM5)</name>
    <name type="common">Oligotropha carboxidovorans</name>
    <dbReference type="NCBI Taxonomy" id="504832"/>
    <lineage>
        <taxon>Bacteria</taxon>
        <taxon>Pseudomonadati</taxon>
        <taxon>Pseudomonadota</taxon>
        <taxon>Alphaproteobacteria</taxon>
        <taxon>Hyphomicrobiales</taxon>
        <taxon>Nitrobacteraceae</taxon>
        <taxon>Afipia</taxon>
    </lineage>
</organism>
<sequence length="187" mass="19790">MAESHATGTTTHTEVPHGKPEFPPFNKDTFASQLVSFAIAFALLYVIVSRFALPRVGGVIKTREGTIEKDLAEAQAFRDESDLALKAYETELAAARTRAQAIGSETRDTLAAQSDAERKAVELSLSAKLAEAEKTISDMRTKAMGNVKAIAADATSAIVQQLSGTAPDAQLIDRAVDASLKGGRDAA</sequence>
<gene>
    <name type="primary">atpF2</name>
    <name type="synonym">atpG</name>
    <name type="ordered locus">OCAR_4698</name>
    <name type="ordered locus">OCA5_c32520</name>
</gene>
<dbReference type="EMBL" id="CP001196">
    <property type="protein sequence ID" value="ACI91840.1"/>
    <property type="molecule type" value="Genomic_DNA"/>
</dbReference>
<dbReference type="EMBL" id="CP002826">
    <property type="protein sequence ID" value="AEI07928.1"/>
    <property type="molecule type" value="Genomic_DNA"/>
</dbReference>
<dbReference type="RefSeq" id="WP_012561871.1">
    <property type="nucleotide sequence ID" value="NC_015684.1"/>
</dbReference>
<dbReference type="SMR" id="B6JDC8"/>
<dbReference type="STRING" id="504832.OCA5_c32520"/>
<dbReference type="KEGG" id="oca:OCAR_4698"/>
<dbReference type="KEGG" id="ocg:OCA5_c32520"/>
<dbReference type="PATRIC" id="fig|504832.7.peg.3419"/>
<dbReference type="eggNOG" id="COG0711">
    <property type="taxonomic scope" value="Bacteria"/>
</dbReference>
<dbReference type="HOGENOM" id="CLU_079215_1_2_5"/>
<dbReference type="OrthoDB" id="9805716at2"/>
<dbReference type="Proteomes" id="UP000007730">
    <property type="component" value="Chromosome"/>
</dbReference>
<dbReference type="GO" id="GO:0005886">
    <property type="term" value="C:plasma membrane"/>
    <property type="evidence" value="ECO:0007669"/>
    <property type="project" value="UniProtKB-SubCell"/>
</dbReference>
<dbReference type="GO" id="GO:0045259">
    <property type="term" value="C:proton-transporting ATP synthase complex"/>
    <property type="evidence" value="ECO:0007669"/>
    <property type="project" value="UniProtKB-KW"/>
</dbReference>
<dbReference type="GO" id="GO:0046933">
    <property type="term" value="F:proton-transporting ATP synthase activity, rotational mechanism"/>
    <property type="evidence" value="ECO:0007669"/>
    <property type="project" value="UniProtKB-UniRule"/>
</dbReference>
<dbReference type="GO" id="GO:0046961">
    <property type="term" value="F:proton-transporting ATPase activity, rotational mechanism"/>
    <property type="evidence" value="ECO:0007669"/>
    <property type="project" value="TreeGrafter"/>
</dbReference>
<dbReference type="CDD" id="cd06503">
    <property type="entry name" value="ATP-synt_Fo_b"/>
    <property type="match status" value="1"/>
</dbReference>
<dbReference type="HAMAP" id="MF_01398">
    <property type="entry name" value="ATP_synth_b_bprime"/>
    <property type="match status" value="1"/>
</dbReference>
<dbReference type="InterPro" id="IPR002146">
    <property type="entry name" value="ATP_synth_b/b'su_bac/chlpt"/>
</dbReference>
<dbReference type="InterPro" id="IPR050059">
    <property type="entry name" value="ATP_synthase_B_chain"/>
</dbReference>
<dbReference type="PANTHER" id="PTHR33445:SF1">
    <property type="entry name" value="ATP SYNTHASE SUBUNIT B"/>
    <property type="match status" value="1"/>
</dbReference>
<dbReference type="PANTHER" id="PTHR33445">
    <property type="entry name" value="ATP SYNTHASE SUBUNIT B', CHLOROPLASTIC"/>
    <property type="match status" value="1"/>
</dbReference>
<dbReference type="Pfam" id="PF00430">
    <property type="entry name" value="ATP-synt_B"/>
    <property type="match status" value="1"/>
</dbReference>
<name>ATPF2_AFIC5</name>